<dbReference type="EC" id="3.6.4.12"/>
<dbReference type="EMBL" id="CH477312">
    <property type="protein sequence ID" value="EAT43892.1"/>
    <property type="molecule type" value="Genomic_DNA"/>
</dbReference>
<dbReference type="SMR" id="Q0IFL2"/>
<dbReference type="FunCoup" id="Q0IFL2">
    <property type="interactions" value="1702"/>
</dbReference>
<dbReference type="STRING" id="7159.Q0IFL2"/>
<dbReference type="PaxDb" id="7159-AAEL004686-PA"/>
<dbReference type="EnsemblMetazoa" id="AAEL004686-RA">
    <property type="protein sequence ID" value="AAEL004686-PA"/>
    <property type="gene ID" value="AAEL004686"/>
</dbReference>
<dbReference type="GeneID" id="5565268"/>
<dbReference type="KEGG" id="aag:5565268"/>
<dbReference type="CTD" id="53439"/>
<dbReference type="VEuPathDB" id="VectorBase:AAEL004686"/>
<dbReference type="eggNOG" id="KOG1942">
    <property type="taxonomic scope" value="Eukaryota"/>
</dbReference>
<dbReference type="HOGENOM" id="CLU_028311_1_1_1"/>
<dbReference type="InParanoid" id="Q0IFL2"/>
<dbReference type="OMA" id="RTLPYNK"/>
<dbReference type="OrthoDB" id="10060499at2759"/>
<dbReference type="PhylomeDB" id="Q0IFL2"/>
<dbReference type="Proteomes" id="UP000008820">
    <property type="component" value="Chromosome 1"/>
</dbReference>
<dbReference type="Proteomes" id="UP000682892">
    <property type="component" value="Unassembled WGS sequence"/>
</dbReference>
<dbReference type="GO" id="GO:0005634">
    <property type="term" value="C:nucleus"/>
    <property type="evidence" value="ECO:0000250"/>
    <property type="project" value="UniProtKB"/>
</dbReference>
<dbReference type="GO" id="GO:0005524">
    <property type="term" value="F:ATP binding"/>
    <property type="evidence" value="ECO:0007669"/>
    <property type="project" value="UniProtKB-KW"/>
</dbReference>
<dbReference type="GO" id="GO:0016887">
    <property type="term" value="F:ATP hydrolysis activity"/>
    <property type="evidence" value="ECO:0007669"/>
    <property type="project" value="InterPro"/>
</dbReference>
<dbReference type="GO" id="GO:0008094">
    <property type="term" value="F:ATP-dependent activity, acting on DNA"/>
    <property type="evidence" value="ECO:0007669"/>
    <property type="project" value="InterPro"/>
</dbReference>
<dbReference type="GO" id="GO:0004386">
    <property type="term" value="F:helicase activity"/>
    <property type="evidence" value="ECO:0007669"/>
    <property type="project" value="UniProtKB-KW"/>
</dbReference>
<dbReference type="GO" id="GO:0003713">
    <property type="term" value="F:transcription coactivator activity"/>
    <property type="evidence" value="ECO:0000250"/>
    <property type="project" value="UniProtKB"/>
</dbReference>
<dbReference type="GO" id="GO:0051301">
    <property type="term" value="P:cell division"/>
    <property type="evidence" value="ECO:0007669"/>
    <property type="project" value="UniProtKB-KW"/>
</dbReference>
<dbReference type="GO" id="GO:0006325">
    <property type="term" value="P:chromatin organization"/>
    <property type="evidence" value="ECO:0007669"/>
    <property type="project" value="UniProtKB-KW"/>
</dbReference>
<dbReference type="GO" id="GO:0006310">
    <property type="term" value="P:DNA recombination"/>
    <property type="evidence" value="ECO:0007669"/>
    <property type="project" value="UniProtKB-KW"/>
</dbReference>
<dbReference type="GO" id="GO:0006281">
    <property type="term" value="P:DNA repair"/>
    <property type="evidence" value="ECO:0007669"/>
    <property type="project" value="UniProtKB-KW"/>
</dbReference>
<dbReference type="GO" id="GO:0090263">
    <property type="term" value="P:positive regulation of canonical Wnt signaling pathway"/>
    <property type="evidence" value="ECO:0000250"/>
    <property type="project" value="UniProtKB"/>
</dbReference>
<dbReference type="GO" id="GO:0042127">
    <property type="term" value="P:regulation of cell population proliferation"/>
    <property type="evidence" value="ECO:0000250"/>
    <property type="project" value="UniProtKB"/>
</dbReference>
<dbReference type="CDD" id="cd00076">
    <property type="entry name" value="HFD_SF"/>
    <property type="match status" value="1"/>
</dbReference>
<dbReference type="FunFam" id="1.10.8.60:FF:000010">
    <property type="entry name" value="RuvB-like helicase"/>
    <property type="match status" value="1"/>
</dbReference>
<dbReference type="FunFam" id="2.40.50.360:FF:000001">
    <property type="entry name" value="RuvB-like helicase"/>
    <property type="match status" value="1"/>
</dbReference>
<dbReference type="Gene3D" id="1.10.8.60">
    <property type="match status" value="1"/>
</dbReference>
<dbReference type="Gene3D" id="3.40.50.300">
    <property type="entry name" value="P-loop containing nucleotide triphosphate hydrolases"/>
    <property type="match status" value="1"/>
</dbReference>
<dbReference type="Gene3D" id="2.40.50.360">
    <property type="entry name" value="RuvB-like helicase, domain II"/>
    <property type="match status" value="1"/>
</dbReference>
<dbReference type="InterPro" id="IPR003593">
    <property type="entry name" value="AAA+_ATPase"/>
</dbReference>
<dbReference type="InterPro" id="IPR027417">
    <property type="entry name" value="P-loop_NTPase"/>
</dbReference>
<dbReference type="InterPro" id="IPR027238">
    <property type="entry name" value="RuvB-like"/>
</dbReference>
<dbReference type="InterPro" id="IPR041048">
    <property type="entry name" value="RuvB-like_C"/>
</dbReference>
<dbReference type="InterPro" id="IPR042487">
    <property type="entry name" value="RuvBL1/2_DNA/RNA_bd_dom"/>
</dbReference>
<dbReference type="InterPro" id="IPR010339">
    <property type="entry name" value="TIP49_P-loop"/>
</dbReference>
<dbReference type="PANTHER" id="PTHR11093">
    <property type="entry name" value="RUVB-RELATED REPTIN AND PONTIN"/>
    <property type="match status" value="1"/>
</dbReference>
<dbReference type="Pfam" id="PF06068">
    <property type="entry name" value="TIP49"/>
    <property type="match status" value="1"/>
</dbReference>
<dbReference type="Pfam" id="PF17856">
    <property type="entry name" value="TIP49_C"/>
    <property type="match status" value="1"/>
</dbReference>
<dbReference type="SMART" id="SM00382">
    <property type="entry name" value="AAA"/>
    <property type="match status" value="1"/>
</dbReference>
<dbReference type="SUPFAM" id="SSF52540">
    <property type="entry name" value="P-loop containing nucleoside triphosphate hydrolases"/>
    <property type="match status" value="1"/>
</dbReference>
<comment type="function">
    <text evidence="1">Acts as a transcriptional coactivator in Wg signaling.</text>
</comment>
<comment type="function">
    <text evidence="1">Proposed core component of the chromatin remodeling Ino80 complex which is involved in transcriptional regulation, DNA replication and probably DNA repair.</text>
</comment>
<comment type="catalytic activity">
    <reaction>
        <text>ATP + H2O = ADP + phosphate + H(+)</text>
        <dbReference type="Rhea" id="RHEA:13065"/>
        <dbReference type="ChEBI" id="CHEBI:15377"/>
        <dbReference type="ChEBI" id="CHEBI:15378"/>
        <dbReference type="ChEBI" id="CHEBI:30616"/>
        <dbReference type="ChEBI" id="CHEBI:43474"/>
        <dbReference type="ChEBI" id="CHEBI:456216"/>
        <dbReference type="EC" id="3.6.4.12"/>
    </reaction>
</comment>
<comment type="subunit">
    <text evidence="1">Forms homohexameric rings. May form a dodecamer with rept made of two stacked hexameric rings. Component of the chromatin remodeling Ino80 complex (By similarity).</text>
</comment>
<comment type="subcellular location">
    <subcellularLocation>
        <location evidence="2">Nucleus</location>
    </subcellularLocation>
</comment>
<comment type="similarity">
    <text evidence="4">Belongs to the RuvB family.</text>
</comment>
<gene>
    <name evidence="2" type="primary">pont</name>
    <name type="ORF">AAEL004686</name>
</gene>
<protein>
    <recommendedName>
        <fullName>RuvB-like helicase 1</fullName>
        <ecNumber>3.6.4.12</ecNumber>
    </recommendedName>
    <alternativeName>
        <fullName>Pontin</fullName>
    </alternativeName>
</protein>
<evidence type="ECO:0000250" key="1"/>
<evidence type="ECO:0000250" key="2">
    <source>
        <dbReference type="UniProtKB" id="Q9VH07"/>
    </source>
</evidence>
<evidence type="ECO:0000250" key="3">
    <source>
        <dbReference type="UniProtKB" id="Q9Y230"/>
    </source>
</evidence>
<evidence type="ECO:0000305" key="4"/>
<evidence type="ECO:0000312" key="5">
    <source>
        <dbReference type="EMBL" id="EAT43892.1"/>
    </source>
</evidence>
<keyword id="KW-0010">Activator</keyword>
<keyword id="KW-0067">ATP-binding</keyword>
<keyword id="KW-0131">Cell cycle</keyword>
<keyword id="KW-0132">Cell division</keyword>
<keyword id="KW-0156">Chromatin regulator</keyword>
<keyword id="KW-0227">DNA damage</keyword>
<keyword id="KW-0233">DNA recombination</keyword>
<keyword id="KW-0234">DNA repair</keyword>
<keyword id="KW-0347">Helicase</keyword>
<keyword id="KW-0378">Hydrolase</keyword>
<keyword id="KW-0547">Nucleotide-binding</keyword>
<keyword id="KW-0539">Nucleus</keyword>
<keyword id="KW-1185">Reference proteome</keyword>
<keyword id="KW-0804">Transcription</keyword>
<keyword id="KW-0805">Transcription regulation</keyword>
<accession>Q0IFL2</accession>
<feature type="chain" id="PRO_0000306319" description="RuvB-like helicase 1">
    <location>
        <begin position="1"/>
        <end position="456"/>
    </location>
</feature>
<feature type="binding site" evidence="3">
    <location>
        <begin position="70"/>
        <end position="77"/>
    </location>
    <ligand>
        <name>ATP</name>
        <dbReference type="ChEBI" id="CHEBI:30616"/>
    </ligand>
</feature>
<organism>
    <name type="scientific">Aedes aegypti</name>
    <name type="common">Yellowfever mosquito</name>
    <name type="synonym">Culex aegypti</name>
    <dbReference type="NCBI Taxonomy" id="7159"/>
    <lineage>
        <taxon>Eukaryota</taxon>
        <taxon>Metazoa</taxon>
        <taxon>Ecdysozoa</taxon>
        <taxon>Arthropoda</taxon>
        <taxon>Hexapoda</taxon>
        <taxon>Insecta</taxon>
        <taxon>Pterygota</taxon>
        <taxon>Neoptera</taxon>
        <taxon>Endopterygota</taxon>
        <taxon>Diptera</taxon>
        <taxon>Nematocera</taxon>
        <taxon>Culicoidea</taxon>
        <taxon>Culicidae</taxon>
        <taxon>Culicinae</taxon>
        <taxon>Aedini</taxon>
        <taxon>Aedes</taxon>
        <taxon>Stegomyia</taxon>
    </lineage>
</organism>
<proteinExistence type="inferred from homology"/>
<name>RUVB1_AEDAE</name>
<reference evidence="5" key="1">
    <citation type="journal article" date="2007" name="Science">
        <title>Genome sequence of Aedes aegypti, a major arbovirus vector.</title>
        <authorList>
            <person name="Nene V."/>
            <person name="Wortman J.R."/>
            <person name="Lawson D."/>
            <person name="Haas B.J."/>
            <person name="Kodira C.D."/>
            <person name="Tu Z.J."/>
            <person name="Loftus B.J."/>
            <person name="Xi Z."/>
            <person name="Megy K."/>
            <person name="Grabherr M."/>
            <person name="Ren Q."/>
            <person name="Zdobnov E.M."/>
            <person name="Lobo N.F."/>
            <person name="Campbell K.S."/>
            <person name="Brown S.E."/>
            <person name="Bonaldo M.F."/>
            <person name="Zhu J."/>
            <person name="Sinkins S.P."/>
            <person name="Hogenkamp D.G."/>
            <person name="Amedeo P."/>
            <person name="Arensburger P."/>
            <person name="Atkinson P.W."/>
            <person name="Bidwell S.L."/>
            <person name="Biedler J."/>
            <person name="Birney E."/>
            <person name="Bruggner R.V."/>
            <person name="Costas J."/>
            <person name="Coy M.R."/>
            <person name="Crabtree J."/>
            <person name="Crawford M."/>
            <person name="DeBruyn B."/>
            <person name="DeCaprio D."/>
            <person name="Eiglmeier K."/>
            <person name="Eisenstadt E."/>
            <person name="El-Dorry H."/>
            <person name="Gelbart W.M."/>
            <person name="Gomes S.L."/>
            <person name="Hammond M."/>
            <person name="Hannick L.I."/>
            <person name="Hogan J.R."/>
            <person name="Holmes M.H."/>
            <person name="Jaffe D."/>
            <person name="Johnston S.J."/>
            <person name="Kennedy R.C."/>
            <person name="Koo H."/>
            <person name="Kravitz S."/>
            <person name="Kriventseva E.V."/>
            <person name="Kulp D."/>
            <person name="Labutti K."/>
            <person name="Lee E."/>
            <person name="Li S."/>
            <person name="Lovin D.D."/>
            <person name="Mao C."/>
            <person name="Mauceli E."/>
            <person name="Menck C.F."/>
            <person name="Miller J.R."/>
            <person name="Montgomery P."/>
            <person name="Mori A."/>
            <person name="Nascimento A.L."/>
            <person name="Naveira H.F."/>
            <person name="Nusbaum C."/>
            <person name="O'Leary S.B."/>
            <person name="Orvis J."/>
            <person name="Pertea M."/>
            <person name="Quesneville H."/>
            <person name="Reidenbach K.R."/>
            <person name="Rogers Y.-H.C."/>
            <person name="Roth C.W."/>
            <person name="Schneider J.R."/>
            <person name="Schatz M."/>
            <person name="Shumway M."/>
            <person name="Stanke M."/>
            <person name="Stinson E.O."/>
            <person name="Tubio J.M.C."/>
            <person name="Vanzee J.P."/>
            <person name="Verjovski-Almeida S."/>
            <person name="Werner D."/>
            <person name="White O.R."/>
            <person name="Wyder S."/>
            <person name="Zeng Q."/>
            <person name="Zhao Q."/>
            <person name="Zhao Y."/>
            <person name="Hill C.A."/>
            <person name="Raikhel A.S."/>
            <person name="Soares M.B."/>
            <person name="Knudson D.L."/>
            <person name="Lee N.H."/>
            <person name="Galagan J."/>
            <person name="Salzberg S.L."/>
            <person name="Paulsen I.T."/>
            <person name="Dimopoulos G."/>
            <person name="Collins F.H."/>
            <person name="Bruce B."/>
            <person name="Fraser-Liggett C.M."/>
            <person name="Severson D.W."/>
        </authorList>
    </citation>
    <scope>NUCLEOTIDE SEQUENCE [LARGE SCALE GENOMIC DNA]</scope>
    <source>
        <strain>LVPib12</strain>
    </source>
</reference>
<sequence length="456" mass="50173">MKIEEVKSTVKTQRIAAHSHVKGLGLDENGVPLQMAAGLVGQKDAREAAGIVVDLIKSKKMSGRALLLAGPPGTGKTAIALAIAQELGNKVPFCPMVGSEVFSSEIKKTEVLMENFRRSIGLRIRETKEVYEGEVTELTPVETENPMGGYGKTISNVVIGLKTAKGTKQLKLDPSIYESLQKEKVEVGDVIYIEANSGAVKRQGRSDTFATEFDLETEEYVPLPKGDVHKKKEVVQDVTLHDLDVANARPQGGQDVLSMVGQIMKPKKTEITDKLRMEINKVVNKYIDQGIAELVPGVLFIDEVHMLDLECFTYLHKSLESAIAPIVIFATNRGRCVIRGTDDIISPHGIPLDLLDRLLIVRTAPYNLSEIEQIIKLRAQTEGLSVEDSAIQALSEIGDNTTLRYAVQLLTPAHQNCKVNGRTQITKDDIVEVNGLFLDAKRSAKFLQEENTKYMM</sequence>